<feature type="chain" id="PRO_0000047706" description="Zinc finger protein 708">
    <location>
        <begin position="1"/>
        <end position="563"/>
    </location>
</feature>
<feature type="domain" description="KRAB" evidence="2">
    <location>
        <begin position="4"/>
        <end position="75"/>
    </location>
</feature>
<feature type="zinc finger region" description="C2H2-type 1; degenerate" evidence="1">
    <location>
        <begin position="140"/>
        <end position="162"/>
    </location>
</feature>
<feature type="zinc finger region" description="C2H2-type 2" evidence="1">
    <location>
        <begin position="168"/>
        <end position="190"/>
    </location>
</feature>
<feature type="zinc finger region" description="C2H2-type 3" evidence="1">
    <location>
        <begin position="196"/>
        <end position="218"/>
    </location>
</feature>
<feature type="zinc finger region" description="C2H2-type 4" evidence="1">
    <location>
        <begin position="224"/>
        <end position="246"/>
    </location>
</feature>
<feature type="zinc finger region" description="C2H2-type 5" evidence="1">
    <location>
        <begin position="252"/>
        <end position="274"/>
    </location>
</feature>
<feature type="zinc finger region" description="C2H2-type 6" evidence="1">
    <location>
        <begin position="280"/>
        <end position="302"/>
    </location>
</feature>
<feature type="zinc finger region" description="C2H2-type 7" evidence="1">
    <location>
        <begin position="308"/>
        <end position="330"/>
    </location>
</feature>
<feature type="zinc finger region" description="C2H2-type 8" evidence="1">
    <location>
        <begin position="336"/>
        <end position="358"/>
    </location>
</feature>
<feature type="zinc finger region" description="C2H2-type 9" evidence="1">
    <location>
        <begin position="364"/>
        <end position="386"/>
    </location>
</feature>
<feature type="zinc finger region" description="C2H2-type 10" evidence="1">
    <location>
        <begin position="392"/>
        <end position="414"/>
    </location>
</feature>
<feature type="zinc finger region" description="C2H2-type 11" evidence="1">
    <location>
        <begin position="420"/>
        <end position="442"/>
    </location>
</feature>
<feature type="zinc finger region" description="C2H2-type 12" evidence="1">
    <location>
        <begin position="448"/>
        <end position="470"/>
    </location>
</feature>
<feature type="zinc finger region" description="C2H2-type 13" evidence="1">
    <location>
        <begin position="476"/>
        <end position="498"/>
    </location>
</feature>
<feature type="zinc finger region" description="C2H2-type 14" evidence="1">
    <location>
        <begin position="504"/>
        <end position="526"/>
    </location>
</feature>
<feature type="zinc finger region" description="C2H2-type 15" evidence="1">
    <location>
        <begin position="532"/>
        <end position="554"/>
    </location>
</feature>
<feature type="modified residue" description="Phosphoserine" evidence="6">
    <location>
        <position position="544"/>
    </location>
</feature>
<feature type="sequence variant" id="VAR_054795" description="In dbSNP:rs547516." evidence="3">
    <original>A</original>
    <variation>V</variation>
    <location>
        <position position="71"/>
    </location>
</feature>
<feature type="sequence variant" id="VAR_054796" description="In dbSNP:rs1781873.">
    <original>K</original>
    <variation>E</variation>
    <location>
        <position position="113"/>
    </location>
</feature>
<feature type="sequence variant" id="VAR_054797" description="In dbSNP:rs1781872.">
    <original>K</original>
    <variation>T</variation>
    <location>
        <position position="122"/>
    </location>
</feature>
<feature type="sequence variant" id="VAR_054798" description="In dbSNP:rs504280." evidence="3">
    <original>R</original>
    <variation>Q</variation>
    <location>
        <position position="130"/>
    </location>
</feature>
<dbReference type="EMBL" id="AK131527">
    <property type="protein sequence ID" value="BAD18665.1"/>
    <property type="molecule type" value="mRNA"/>
</dbReference>
<dbReference type="EMBL" id="AC022432">
    <property type="status" value="NOT_ANNOTATED_CDS"/>
    <property type="molecule type" value="Genomic_DNA"/>
</dbReference>
<dbReference type="EMBL" id="X52339">
    <property type="protein sequence ID" value="CAA36565.1"/>
    <property type="molecule type" value="mRNA"/>
</dbReference>
<dbReference type="CCDS" id="CCDS32980.1"/>
<dbReference type="PIR" id="I37976">
    <property type="entry name" value="I37976"/>
</dbReference>
<dbReference type="RefSeq" id="NP_067092.2">
    <property type="nucleotide sequence ID" value="NM_021269.3"/>
</dbReference>
<dbReference type="SMR" id="P17019"/>
<dbReference type="BioGRID" id="113394">
    <property type="interactions" value="19"/>
</dbReference>
<dbReference type="FunCoup" id="P17019">
    <property type="interactions" value="57"/>
</dbReference>
<dbReference type="IntAct" id="P17019">
    <property type="interactions" value="16"/>
</dbReference>
<dbReference type="STRING" id="9606.ENSP00000349401"/>
<dbReference type="GlyGen" id="P17019">
    <property type="glycosylation" value="1 site, 1 O-linked glycan (1 site)"/>
</dbReference>
<dbReference type="iPTMnet" id="P17019"/>
<dbReference type="PhosphoSitePlus" id="P17019"/>
<dbReference type="BioMuta" id="ZNF708"/>
<dbReference type="DMDM" id="527504092"/>
<dbReference type="jPOST" id="P17019"/>
<dbReference type="MassIVE" id="P17019"/>
<dbReference type="PaxDb" id="9606-ENSP00000349401"/>
<dbReference type="PeptideAtlas" id="P17019"/>
<dbReference type="ProteomicsDB" id="53415"/>
<dbReference type="Antibodypedia" id="28681">
    <property type="antibodies" value="88 antibodies from 14 providers"/>
</dbReference>
<dbReference type="DNASU" id="7562"/>
<dbReference type="Ensembl" id="ENST00000356929.3">
    <property type="protein sequence ID" value="ENSP00000349401.2"/>
    <property type="gene ID" value="ENSG00000182141.11"/>
</dbReference>
<dbReference type="GeneID" id="7562"/>
<dbReference type="KEGG" id="hsa:7562"/>
<dbReference type="MANE-Select" id="ENST00000356929.3">
    <property type="protein sequence ID" value="ENSP00000349401.2"/>
    <property type="RefSeq nucleotide sequence ID" value="NM_021269.3"/>
    <property type="RefSeq protein sequence ID" value="NP_067092.2"/>
</dbReference>
<dbReference type="UCSC" id="uc002npq.2">
    <property type="organism name" value="human"/>
</dbReference>
<dbReference type="AGR" id="HGNC:12945"/>
<dbReference type="CTD" id="7562"/>
<dbReference type="GeneCards" id="ZNF708"/>
<dbReference type="HGNC" id="HGNC:12945">
    <property type="gene designation" value="ZNF708"/>
</dbReference>
<dbReference type="HPA" id="ENSG00000182141">
    <property type="expression patterns" value="Low tissue specificity"/>
</dbReference>
<dbReference type="neXtProt" id="NX_P17019"/>
<dbReference type="OpenTargets" id="ENSG00000182141"/>
<dbReference type="VEuPathDB" id="HostDB:ENSG00000182141"/>
<dbReference type="eggNOG" id="KOG1721">
    <property type="taxonomic scope" value="Eukaryota"/>
</dbReference>
<dbReference type="GeneTree" id="ENSGT00940000153236"/>
<dbReference type="HOGENOM" id="CLU_002678_44_5_1"/>
<dbReference type="InParanoid" id="P17019"/>
<dbReference type="OMA" id="IVQYDKY"/>
<dbReference type="OrthoDB" id="9537077at2759"/>
<dbReference type="PAN-GO" id="P17019">
    <property type="GO annotations" value="3 GO annotations based on evolutionary models"/>
</dbReference>
<dbReference type="TreeFam" id="TF342117"/>
<dbReference type="PathwayCommons" id="P17019"/>
<dbReference type="Reactome" id="R-HSA-212436">
    <property type="pathway name" value="Generic Transcription Pathway"/>
</dbReference>
<dbReference type="Reactome" id="R-HSA-9843940">
    <property type="pathway name" value="Regulation of endogenous retroelements by KRAB-ZFP proteins"/>
</dbReference>
<dbReference type="SignaLink" id="P17019"/>
<dbReference type="BioGRID-ORCS" id="7562">
    <property type="hits" value="6 hits in 1104 CRISPR screens"/>
</dbReference>
<dbReference type="ChiTaRS" id="ZNF708">
    <property type="organism name" value="human"/>
</dbReference>
<dbReference type="GenomeRNAi" id="7562"/>
<dbReference type="Pharos" id="P17019">
    <property type="development level" value="Tdark"/>
</dbReference>
<dbReference type="PRO" id="PR:P17019"/>
<dbReference type="Proteomes" id="UP000005640">
    <property type="component" value="Chromosome 19"/>
</dbReference>
<dbReference type="RNAct" id="P17019">
    <property type="molecule type" value="protein"/>
</dbReference>
<dbReference type="Bgee" id="ENSG00000182141">
    <property type="expression patterns" value="Expressed in cortical plate and 132 other cell types or tissues"/>
</dbReference>
<dbReference type="ExpressionAtlas" id="P17019">
    <property type="expression patterns" value="baseline and differential"/>
</dbReference>
<dbReference type="GO" id="GO:0005634">
    <property type="term" value="C:nucleus"/>
    <property type="evidence" value="ECO:0007669"/>
    <property type="project" value="UniProtKB-SubCell"/>
</dbReference>
<dbReference type="GO" id="GO:0003677">
    <property type="term" value="F:DNA binding"/>
    <property type="evidence" value="ECO:0007669"/>
    <property type="project" value="UniProtKB-KW"/>
</dbReference>
<dbReference type="GO" id="GO:0008270">
    <property type="term" value="F:zinc ion binding"/>
    <property type="evidence" value="ECO:0007669"/>
    <property type="project" value="UniProtKB-KW"/>
</dbReference>
<dbReference type="GO" id="GO:0006355">
    <property type="term" value="P:regulation of DNA-templated transcription"/>
    <property type="evidence" value="ECO:0007669"/>
    <property type="project" value="InterPro"/>
</dbReference>
<dbReference type="CDD" id="cd07765">
    <property type="entry name" value="KRAB_A-box"/>
    <property type="match status" value="1"/>
</dbReference>
<dbReference type="FunFam" id="3.30.160.60:FF:002472">
    <property type="match status" value="1"/>
</dbReference>
<dbReference type="FunFam" id="3.30.160.60:FF:001737">
    <property type="entry name" value="Zinc finger protein 100"/>
    <property type="match status" value="1"/>
</dbReference>
<dbReference type="FunFam" id="3.30.160.60:FF:000374">
    <property type="entry name" value="Zinc finger protein 208"/>
    <property type="match status" value="1"/>
</dbReference>
<dbReference type="FunFam" id="3.30.160.60:FF:001868">
    <property type="entry name" value="Zinc finger protein 264"/>
    <property type="match status" value="1"/>
</dbReference>
<dbReference type="FunFam" id="3.30.160.60:FF:000120">
    <property type="entry name" value="Zinc finger protein 430"/>
    <property type="match status" value="5"/>
</dbReference>
<dbReference type="FunFam" id="3.30.160.60:FF:002448">
    <property type="entry name" value="Zinc finger protein 430"/>
    <property type="match status" value="1"/>
</dbReference>
<dbReference type="FunFam" id="3.30.160.60:FF:002090">
    <property type="entry name" value="Zinc finger protein 473"/>
    <property type="match status" value="1"/>
</dbReference>
<dbReference type="FunFam" id="3.30.160.60:FF:002679">
    <property type="entry name" value="Zinc finger protein 726"/>
    <property type="match status" value="2"/>
</dbReference>
<dbReference type="FunFam" id="3.30.160.60:FF:002483">
    <property type="entry name" value="Zinc finger protein 90"/>
    <property type="match status" value="1"/>
</dbReference>
<dbReference type="Gene3D" id="6.10.140.140">
    <property type="match status" value="1"/>
</dbReference>
<dbReference type="Gene3D" id="3.30.160.60">
    <property type="entry name" value="Classic Zinc Finger"/>
    <property type="match status" value="14"/>
</dbReference>
<dbReference type="InterPro" id="IPR001909">
    <property type="entry name" value="KRAB"/>
</dbReference>
<dbReference type="InterPro" id="IPR036051">
    <property type="entry name" value="KRAB_dom_sf"/>
</dbReference>
<dbReference type="InterPro" id="IPR036236">
    <property type="entry name" value="Znf_C2H2_sf"/>
</dbReference>
<dbReference type="InterPro" id="IPR013087">
    <property type="entry name" value="Znf_C2H2_type"/>
</dbReference>
<dbReference type="PANTHER" id="PTHR24376">
    <property type="entry name" value="ZINC FINGER PROTEIN"/>
    <property type="match status" value="1"/>
</dbReference>
<dbReference type="PANTHER" id="PTHR24376:SF248">
    <property type="entry name" value="ZINC FINGER PROTEIN 493"/>
    <property type="match status" value="1"/>
</dbReference>
<dbReference type="Pfam" id="PF01352">
    <property type="entry name" value="KRAB"/>
    <property type="match status" value="1"/>
</dbReference>
<dbReference type="Pfam" id="PF00096">
    <property type="entry name" value="zf-C2H2"/>
    <property type="match status" value="13"/>
</dbReference>
<dbReference type="SMART" id="SM00349">
    <property type="entry name" value="KRAB"/>
    <property type="match status" value="1"/>
</dbReference>
<dbReference type="SMART" id="SM00355">
    <property type="entry name" value="ZnF_C2H2"/>
    <property type="match status" value="14"/>
</dbReference>
<dbReference type="SUPFAM" id="SSF57667">
    <property type="entry name" value="beta-beta-alpha zinc fingers"/>
    <property type="match status" value="8"/>
</dbReference>
<dbReference type="SUPFAM" id="SSF109640">
    <property type="entry name" value="KRAB domain (Kruppel-associated box)"/>
    <property type="match status" value="1"/>
</dbReference>
<dbReference type="PROSITE" id="PS50805">
    <property type="entry name" value="KRAB"/>
    <property type="match status" value="1"/>
</dbReference>
<dbReference type="PROSITE" id="PS00028">
    <property type="entry name" value="ZINC_FINGER_C2H2_1"/>
    <property type="match status" value="14"/>
</dbReference>
<dbReference type="PROSITE" id="PS50157">
    <property type="entry name" value="ZINC_FINGER_C2H2_2"/>
    <property type="match status" value="15"/>
</dbReference>
<comment type="function">
    <text>May be involved in transcriptional regulation.</text>
</comment>
<comment type="subcellular location">
    <subcellularLocation>
        <location evidence="4">Nucleus</location>
    </subcellularLocation>
</comment>
<comment type="similarity">
    <text evidence="4">Belongs to the krueppel C2H2-type zinc-finger protein family.</text>
</comment>
<name>ZN708_HUMAN</name>
<protein>
    <recommendedName>
        <fullName evidence="4">Zinc finger protein 708</fullName>
    </recommendedName>
    <alternativeName>
        <fullName>Zinc finger protein 15</fullName>
    </alternativeName>
    <alternativeName>
        <fullName>Zinc finger protein 15-like 1</fullName>
    </alternativeName>
    <alternativeName>
        <fullName>Zinc finger protein KOX8</fullName>
    </alternativeName>
</protein>
<accession>P17019</accession>
<accession>Q6ZMR0</accession>
<gene>
    <name evidence="5" type="primary">ZNF708</name>
    <name type="synonym">KOX8</name>
    <name type="synonym">ZNF15</name>
    <name type="synonym">ZNF15L1</name>
</gene>
<keyword id="KW-0238">DNA-binding</keyword>
<keyword id="KW-0479">Metal-binding</keyword>
<keyword id="KW-0539">Nucleus</keyword>
<keyword id="KW-0597">Phosphoprotein</keyword>
<keyword id="KW-1267">Proteomics identification</keyword>
<keyword id="KW-1185">Reference proteome</keyword>
<keyword id="KW-0677">Repeat</keyword>
<keyword id="KW-0804">Transcription</keyword>
<keyword id="KW-0805">Transcription regulation</keyword>
<keyword id="KW-0862">Zinc</keyword>
<keyword id="KW-0863">Zinc-finger</keyword>
<reference key="1">
    <citation type="journal article" date="2004" name="Nat. Genet.">
        <title>Complete sequencing and characterization of 21,243 full-length human cDNAs.</title>
        <authorList>
            <person name="Ota T."/>
            <person name="Suzuki Y."/>
            <person name="Nishikawa T."/>
            <person name="Otsuki T."/>
            <person name="Sugiyama T."/>
            <person name="Irie R."/>
            <person name="Wakamatsu A."/>
            <person name="Hayashi K."/>
            <person name="Sato H."/>
            <person name="Nagai K."/>
            <person name="Kimura K."/>
            <person name="Makita H."/>
            <person name="Sekine M."/>
            <person name="Obayashi M."/>
            <person name="Nishi T."/>
            <person name="Shibahara T."/>
            <person name="Tanaka T."/>
            <person name="Ishii S."/>
            <person name="Yamamoto J."/>
            <person name="Saito K."/>
            <person name="Kawai Y."/>
            <person name="Isono Y."/>
            <person name="Nakamura Y."/>
            <person name="Nagahari K."/>
            <person name="Murakami K."/>
            <person name="Yasuda T."/>
            <person name="Iwayanagi T."/>
            <person name="Wagatsuma M."/>
            <person name="Shiratori A."/>
            <person name="Sudo H."/>
            <person name="Hosoiri T."/>
            <person name="Kaku Y."/>
            <person name="Kodaira H."/>
            <person name="Kondo H."/>
            <person name="Sugawara M."/>
            <person name="Takahashi M."/>
            <person name="Kanda K."/>
            <person name="Yokoi T."/>
            <person name="Furuya T."/>
            <person name="Kikkawa E."/>
            <person name="Omura Y."/>
            <person name="Abe K."/>
            <person name="Kamihara K."/>
            <person name="Katsuta N."/>
            <person name="Sato K."/>
            <person name="Tanikawa M."/>
            <person name="Yamazaki M."/>
            <person name="Ninomiya K."/>
            <person name="Ishibashi T."/>
            <person name="Yamashita H."/>
            <person name="Murakawa K."/>
            <person name="Fujimori K."/>
            <person name="Tanai H."/>
            <person name="Kimata M."/>
            <person name="Watanabe M."/>
            <person name="Hiraoka S."/>
            <person name="Chiba Y."/>
            <person name="Ishida S."/>
            <person name="Ono Y."/>
            <person name="Takiguchi S."/>
            <person name="Watanabe S."/>
            <person name="Yosida M."/>
            <person name="Hotuta T."/>
            <person name="Kusano J."/>
            <person name="Kanehori K."/>
            <person name="Takahashi-Fujii A."/>
            <person name="Hara H."/>
            <person name="Tanase T.-O."/>
            <person name="Nomura Y."/>
            <person name="Togiya S."/>
            <person name="Komai F."/>
            <person name="Hara R."/>
            <person name="Takeuchi K."/>
            <person name="Arita M."/>
            <person name="Imose N."/>
            <person name="Musashino K."/>
            <person name="Yuuki H."/>
            <person name="Oshima A."/>
            <person name="Sasaki N."/>
            <person name="Aotsuka S."/>
            <person name="Yoshikawa Y."/>
            <person name="Matsunawa H."/>
            <person name="Ichihara T."/>
            <person name="Shiohata N."/>
            <person name="Sano S."/>
            <person name="Moriya S."/>
            <person name="Momiyama H."/>
            <person name="Satoh N."/>
            <person name="Takami S."/>
            <person name="Terashima Y."/>
            <person name="Suzuki O."/>
            <person name="Nakagawa S."/>
            <person name="Senoh A."/>
            <person name="Mizoguchi H."/>
            <person name="Goto Y."/>
            <person name="Shimizu F."/>
            <person name="Wakebe H."/>
            <person name="Hishigaki H."/>
            <person name="Watanabe T."/>
            <person name="Sugiyama A."/>
            <person name="Takemoto M."/>
            <person name="Kawakami B."/>
            <person name="Yamazaki M."/>
            <person name="Watanabe K."/>
            <person name="Kumagai A."/>
            <person name="Itakura S."/>
            <person name="Fukuzumi Y."/>
            <person name="Fujimori Y."/>
            <person name="Komiyama M."/>
            <person name="Tashiro H."/>
            <person name="Tanigami A."/>
            <person name="Fujiwara T."/>
            <person name="Ono T."/>
            <person name="Yamada K."/>
            <person name="Fujii Y."/>
            <person name="Ozaki K."/>
            <person name="Hirao M."/>
            <person name="Ohmori Y."/>
            <person name="Kawabata A."/>
            <person name="Hikiji T."/>
            <person name="Kobatake N."/>
            <person name="Inagaki H."/>
            <person name="Ikema Y."/>
            <person name="Okamoto S."/>
            <person name="Okitani R."/>
            <person name="Kawakami T."/>
            <person name="Noguchi S."/>
            <person name="Itoh T."/>
            <person name="Shigeta K."/>
            <person name="Senba T."/>
            <person name="Matsumura K."/>
            <person name="Nakajima Y."/>
            <person name="Mizuno T."/>
            <person name="Morinaga M."/>
            <person name="Sasaki M."/>
            <person name="Togashi T."/>
            <person name="Oyama M."/>
            <person name="Hata H."/>
            <person name="Watanabe M."/>
            <person name="Komatsu T."/>
            <person name="Mizushima-Sugano J."/>
            <person name="Satoh T."/>
            <person name="Shirai Y."/>
            <person name="Takahashi Y."/>
            <person name="Nakagawa K."/>
            <person name="Okumura K."/>
            <person name="Nagase T."/>
            <person name="Nomura N."/>
            <person name="Kikuchi H."/>
            <person name="Masuho Y."/>
            <person name="Yamashita R."/>
            <person name="Nakai K."/>
            <person name="Yada T."/>
            <person name="Nakamura Y."/>
            <person name="Ohara O."/>
            <person name="Isogai T."/>
            <person name="Sugano S."/>
        </authorList>
    </citation>
    <scope>NUCLEOTIDE SEQUENCE [LARGE SCALE MRNA]</scope>
    <scope>VARIANTS VAL-71 AND GLN-130</scope>
    <source>
        <tissue>Cerebellum</tissue>
        <tissue>Hippocampus</tissue>
    </source>
</reference>
<reference key="2">
    <citation type="journal article" date="2004" name="Nature">
        <title>The DNA sequence and biology of human chromosome 19.</title>
        <authorList>
            <person name="Grimwood J."/>
            <person name="Gordon L.A."/>
            <person name="Olsen A.S."/>
            <person name="Terry A."/>
            <person name="Schmutz J."/>
            <person name="Lamerdin J.E."/>
            <person name="Hellsten U."/>
            <person name="Goodstein D."/>
            <person name="Couronne O."/>
            <person name="Tran-Gyamfi M."/>
            <person name="Aerts A."/>
            <person name="Altherr M."/>
            <person name="Ashworth L."/>
            <person name="Bajorek E."/>
            <person name="Black S."/>
            <person name="Branscomb E."/>
            <person name="Caenepeel S."/>
            <person name="Carrano A.V."/>
            <person name="Caoile C."/>
            <person name="Chan Y.M."/>
            <person name="Christensen M."/>
            <person name="Cleland C.A."/>
            <person name="Copeland A."/>
            <person name="Dalin E."/>
            <person name="Dehal P."/>
            <person name="Denys M."/>
            <person name="Detter J.C."/>
            <person name="Escobar J."/>
            <person name="Flowers D."/>
            <person name="Fotopulos D."/>
            <person name="Garcia C."/>
            <person name="Georgescu A.M."/>
            <person name="Glavina T."/>
            <person name="Gomez M."/>
            <person name="Gonzales E."/>
            <person name="Groza M."/>
            <person name="Hammon N."/>
            <person name="Hawkins T."/>
            <person name="Haydu L."/>
            <person name="Ho I."/>
            <person name="Huang W."/>
            <person name="Israni S."/>
            <person name="Jett J."/>
            <person name="Kadner K."/>
            <person name="Kimball H."/>
            <person name="Kobayashi A."/>
            <person name="Larionov V."/>
            <person name="Leem S.-H."/>
            <person name="Lopez F."/>
            <person name="Lou Y."/>
            <person name="Lowry S."/>
            <person name="Malfatti S."/>
            <person name="Martinez D."/>
            <person name="McCready P.M."/>
            <person name="Medina C."/>
            <person name="Morgan J."/>
            <person name="Nelson K."/>
            <person name="Nolan M."/>
            <person name="Ovcharenko I."/>
            <person name="Pitluck S."/>
            <person name="Pollard M."/>
            <person name="Popkie A.P."/>
            <person name="Predki P."/>
            <person name="Quan G."/>
            <person name="Ramirez L."/>
            <person name="Rash S."/>
            <person name="Retterer J."/>
            <person name="Rodriguez A."/>
            <person name="Rogers S."/>
            <person name="Salamov A."/>
            <person name="Salazar A."/>
            <person name="She X."/>
            <person name="Smith D."/>
            <person name="Slezak T."/>
            <person name="Solovyev V."/>
            <person name="Thayer N."/>
            <person name="Tice H."/>
            <person name="Tsai M."/>
            <person name="Ustaszewska A."/>
            <person name="Vo N."/>
            <person name="Wagner M."/>
            <person name="Wheeler J."/>
            <person name="Wu K."/>
            <person name="Xie G."/>
            <person name="Yang J."/>
            <person name="Dubchak I."/>
            <person name="Furey T.S."/>
            <person name="DeJong P."/>
            <person name="Dickson M."/>
            <person name="Gordon D."/>
            <person name="Eichler E.E."/>
            <person name="Pennacchio L.A."/>
            <person name="Richardson P."/>
            <person name="Stubbs L."/>
            <person name="Rokhsar D.S."/>
            <person name="Myers R.M."/>
            <person name="Rubin E.M."/>
            <person name="Lucas S.M."/>
        </authorList>
    </citation>
    <scope>NUCLEOTIDE SEQUENCE [LARGE SCALE GENOMIC DNA]</scope>
</reference>
<reference key="3">
    <citation type="journal article" date="1990" name="New Biol.">
        <title>Multiple genes encoding zinc finger domains are expressed in human T cells.</title>
        <authorList>
            <person name="Thiesen H.-J."/>
        </authorList>
    </citation>
    <scope>NUCLEOTIDE SEQUENCE [MRNA] OF 476-531</scope>
    <source>
        <tissue>Lymphoid tissue</tissue>
    </source>
</reference>
<reference key="4">
    <citation type="journal article" date="2011" name="Sci. Signal.">
        <title>System-wide temporal characterization of the proteome and phosphoproteome of human embryonic stem cell differentiation.</title>
        <authorList>
            <person name="Rigbolt K.T."/>
            <person name="Prokhorova T.A."/>
            <person name="Akimov V."/>
            <person name="Henningsen J."/>
            <person name="Johansen P.T."/>
            <person name="Kratchmarova I."/>
            <person name="Kassem M."/>
            <person name="Mann M."/>
            <person name="Olsen J.V."/>
            <person name="Blagoev B."/>
        </authorList>
    </citation>
    <scope>PHOSPHORYLATION [LARGE SCALE ANALYSIS] AT SER-544</scope>
    <scope>IDENTIFICATION BY MASS SPECTROMETRY [LARGE SCALE ANALYSIS]</scope>
</reference>
<sequence>MGPLTFMDVAIEFSLEEWQCLDTAQQNLYRNVMLENYRNLVFLGIAVSNLDLITCLEQGKEPWNMKRHEMAAKPPAMCSHFAKDLRPEQYIKNSFQQVILRRYGKCGYQKGCKSVDEHKLHKGGHKGLNRCVTTTQSKIVQCDKYVKVFHKYSNAKRHKIRHTGKNPFKCKECGKSFCMLSQLTQHEIIHTGEKPYKCEECGKAFKKSSNLTNHKIIHTGEKPYKCEECGKAFNQSSTLTRHKIIHTGEKLYKCEECGKAFNRSSNLTKHKIVHTGEKPYKCEECGKAFKQSSNLTNHKKIHTGEKPYKCGECGKAFTLSSHLTTHKRIHTGEKPYKCEECGKAFSVFSTLTKHKIIHTEEKPYKCEECGKAFNRSSHLTNHKVIHTGEKPYKCEECGKAFTKSSTLTYHKVIHTGKKPYKCEECGKAFSIFSILTKHKVIHTEDKPYKCEECGKTFNYSSNFTNHKKIHTGEKPYKCEECGKSFILSSHLTTHKIIHTGEKPYKCKECGKAFNQSSTLMKHKIIHTGEKPYKCEECGKAFNQSPNLTKHKRIHTKEKPYKCK</sequence>
<evidence type="ECO:0000255" key="1">
    <source>
        <dbReference type="PROSITE-ProRule" id="PRU00042"/>
    </source>
</evidence>
<evidence type="ECO:0000255" key="2">
    <source>
        <dbReference type="PROSITE-ProRule" id="PRU00119"/>
    </source>
</evidence>
<evidence type="ECO:0000269" key="3">
    <source>
    </source>
</evidence>
<evidence type="ECO:0000305" key="4"/>
<evidence type="ECO:0000312" key="5">
    <source>
        <dbReference type="HGNC" id="HGNC:12945"/>
    </source>
</evidence>
<evidence type="ECO:0007744" key="6">
    <source>
    </source>
</evidence>
<proteinExistence type="evidence at protein level"/>
<organism>
    <name type="scientific">Homo sapiens</name>
    <name type="common">Human</name>
    <dbReference type="NCBI Taxonomy" id="9606"/>
    <lineage>
        <taxon>Eukaryota</taxon>
        <taxon>Metazoa</taxon>
        <taxon>Chordata</taxon>
        <taxon>Craniata</taxon>
        <taxon>Vertebrata</taxon>
        <taxon>Euteleostomi</taxon>
        <taxon>Mammalia</taxon>
        <taxon>Eutheria</taxon>
        <taxon>Euarchontoglires</taxon>
        <taxon>Primates</taxon>
        <taxon>Haplorrhini</taxon>
        <taxon>Catarrhini</taxon>
        <taxon>Hominidae</taxon>
        <taxon>Homo</taxon>
    </lineage>
</organism>